<sequence>MLERTLRVLEYNKVKEQLLEHTASSLGRDKVKHLVPSTDFEEIVEMQDTTDEAAKVIRLKGSAPLGGITDIRSNVKRAKIGSMLSPNELLDIANTMYGSRNMKRFIEDMVDNGVELPILETHVAQIVSLYDLEKKITNCIGDGGEVVDSASDKLRGIRTQIRTAESRIREKLENMTRSSNAQKMLSDSIVTIRNERYVIPVKQEYRGVYGGIVHDQSASGQTLFIEPQVIVELNNALQEARVKEKQEIERILLMLTEEVAVEADIVLSNVEVVANLDFIFAKAFYAKRIKATKPIVNNERYMDLRQARHPLIDPEVIVPNNIMLGKDFTTIVITGPNTGGKTVTLKTVGICVLMAQSGLHIPVMDESEICVFKNIFADIGDEQSIEQSLSTFSSHMVNIVDILEKADFESLVLFDELGAGTDPQEGAALAISILDEVCNRGARVVATTHYPELKAYGYNREQVINASVEFDVNTLSPTHKLLIGVPGRSNAFEISKRLGLSNRVIDQARNHISTDTNKIENMIAKLEESQKNAERDWNEAEALRKQSEKLHRELQRQIIEFNEERDERLLKAQKEGEEKVEAAKKEAEGIIQELRQLRKAQLANVKDHELIEAKSRLEGAAPELVKKQKVNVKNTAPKQQLRAGDEVKVLTFGQKGQLLEKVSDTEWSVQIGILKMKVKESNMEYINTPKQTEKKAVATVKGRDYHVSLELDLRGERFENAMARVEKYLDDAQLASYPRVSIIHGKGTGALRQGVQDYLKKHRGVKTFRYGDMGEGGLGVTVVELK</sequence>
<reference key="1">
    <citation type="journal article" date="2003" name="Nature">
        <title>The genome sequence of Bacillus anthracis Ames and comparison to closely related bacteria.</title>
        <authorList>
            <person name="Read T.D."/>
            <person name="Peterson S.N."/>
            <person name="Tourasse N.J."/>
            <person name="Baillie L.W."/>
            <person name="Paulsen I.T."/>
            <person name="Nelson K.E."/>
            <person name="Tettelin H."/>
            <person name="Fouts D.E."/>
            <person name="Eisen J.A."/>
            <person name="Gill S.R."/>
            <person name="Holtzapple E.K."/>
            <person name="Okstad O.A."/>
            <person name="Helgason E."/>
            <person name="Rilstone J."/>
            <person name="Wu M."/>
            <person name="Kolonay J.F."/>
            <person name="Beanan M.J."/>
            <person name="Dodson R.J."/>
            <person name="Brinkac L.M."/>
            <person name="Gwinn M.L."/>
            <person name="DeBoy R.T."/>
            <person name="Madpu R."/>
            <person name="Daugherty S.C."/>
            <person name="Durkin A.S."/>
            <person name="Haft D.H."/>
            <person name="Nelson W.C."/>
            <person name="Peterson J.D."/>
            <person name="Pop M."/>
            <person name="Khouri H.M."/>
            <person name="Radune D."/>
            <person name="Benton J.L."/>
            <person name="Mahamoud Y."/>
            <person name="Jiang L."/>
            <person name="Hance I.R."/>
            <person name="Weidman J.F."/>
            <person name="Berry K.J."/>
            <person name="Plaut R.D."/>
            <person name="Wolf A.M."/>
            <person name="Watkins K.L."/>
            <person name="Nierman W.C."/>
            <person name="Hazen A."/>
            <person name="Cline R.T."/>
            <person name="Redmond C."/>
            <person name="Thwaite J.E."/>
            <person name="White O."/>
            <person name="Salzberg S.L."/>
            <person name="Thomason B."/>
            <person name="Friedlander A.M."/>
            <person name="Koehler T.M."/>
            <person name="Hanna P.C."/>
            <person name="Kolstoe A.-B."/>
            <person name="Fraser C.M."/>
        </authorList>
    </citation>
    <scope>NUCLEOTIDE SEQUENCE [LARGE SCALE GENOMIC DNA]</scope>
    <source>
        <strain>Ames / isolate Porton</strain>
    </source>
</reference>
<reference key="2">
    <citation type="submission" date="2004-01" db="EMBL/GenBank/DDBJ databases">
        <title>Complete genome sequence of Bacillus anthracis Sterne.</title>
        <authorList>
            <person name="Brettin T.S."/>
            <person name="Bruce D."/>
            <person name="Challacombe J.F."/>
            <person name="Gilna P."/>
            <person name="Han C."/>
            <person name="Hill K."/>
            <person name="Hitchcock P."/>
            <person name="Jackson P."/>
            <person name="Keim P."/>
            <person name="Longmire J."/>
            <person name="Lucas S."/>
            <person name="Okinaka R."/>
            <person name="Richardson P."/>
            <person name="Rubin E."/>
            <person name="Tice H."/>
        </authorList>
    </citation>
    <scope>NUCLEOTIDE SEQUENCE [LARGE SCALE GENOMIC DNA]</scope>
    <source>
        <strain>Sterne</strain>
    </source>
</reference>
<reference key="3">
    <citation type="journal article" date="2009" name="J. Bacteriol.">
        <title>The complete genome sequence of Bacillus anthracis Ames 'Ancestor'.</title>
        <authorList>
            <person name="Ravel J."/>
            <person name="Jiang L."/>
            <person name="Stanley S.T."/>
            <person name="Wilson M.R."/>
            <person name="Decker R.S."/>
            <person name="Read T.D."/>
            <person name="Worsham P."/>
            <person name="Keim P.S."/>
            <person name="Salzberg S.L."/>
            <person name="Fraser-Liggett C.M."/>
            <person name="Rasko D.A."/>
        </authorList>
    </citation>
    <scope>NUCLEOTIDE SEQUENCE [LARGE SCALE GENOMIC DNA]</scope>
    <source>
        <strain>Ames ancestor</strain>
    </source>
</reference>
<protein>
    <recommendedName>
        <fullName evidence="1">Endonuclease MutS2</fullName>
        <ecNumber evidence="1">3.1.-.-</ecNumber>
    </recommendedName>
    <alternativeName>
        <fullName evidence="1">Ribosome-associated protein quality control-upstream factor</fullName>
        <shortName evidence="1">RQC-upstream factor</shortName>
        <shortName evidence="1">RqcU</shortName>
        <ecNumber evidence="1">3.6.4.-</ecNumber>
    </alternativeName>
</protein>
<proteinExistence type="inferred from homology"/>
<comment type="function">
    <text evidence="1">Endonuclease that is involved in the suppression of homologous recombination and thus may have a key role in the control of bacterial genetic diversity.</text>
</comment>
<comment type="function">
    <text evidence="1">Acts as a ribosome collision sensor, splitting the ribosome into its 2 subunits. Detects stalled/collided 70S ribosomes which it binds and splits by an ATP-hydrolysis driven conformational change. Acts upstream of the ribosome quality control system (RQC), a ribosome-associated complex that mediates the extraction of incompletely synthesized nascent chains from stalled ribosomes and their subsequent degradation. Probably generates substrates for RQC.</text>
</comment>
<comment type="subunit">
    <text evidence="1">Homodimer. Binds to stalled ribosomes, contacting rRNA.</text>
</comment>
<comment type="similarity">
    <text evidence="1">Belongs to the DNA mismatch repair MutS family. MutS2 subfamily.</text>
</comment>
<gene>
    <name evidence="1" type="primary">mutS2</name>
    <name evidence="1" type="synonym">rqcU</name>
    <name type="ordered locus">BA_4794</name>
    <name type="ordered locus">GBAA_4794</name>
    <name type="ordered locus">BAS4447</name>
</gene>
<feature type="chain" id="PRO_1000075467" description="Endonuclease MutS2">
    <location>
        <begin position="1"/>
        <end position="786"/>
    </location>
</feature>
<feature type="domain" description="Smr" evidence="1">
    <location>
        <begin position="711"/>
        <end position="786"/>
    </location>
</feature>
<feature type="binding site" evidence="1">
    <location>
        <begin position="335"/>
        <end position="342"/>
    </location>
    <ligand>
        <name>ATP</name>
        <dbReference type="ChEBI" id="CHEBI:30616"/>
    </ligand>
</feature>
<name>MUTS2_BACAN</name>
<keyword id="KW-0067">ATP-binding</keyword>
<keyword id="KW-0238">DNA-binding</keyword>
<keyword id="KW-0255">Endonuclease</keyword>
<keyword id="KW-0378">Hydrolase</keyword>
<keyword id="KW-0540">Nuclease</keyword>
<keyword id="KW-0547">Nucleotide-binding</keyword>
<keyword id="KW-1185">Reference proteome</keyword>
<keyword id="KW-0694">RNA-binding</keyword>
<keyword id="KW-0699">rRNA-binding</keyword>
<accession>Q81L40</accession>
<accession>Q6HSJ4</accession>
<accession>Q6KLT9</accession>
<evidence type="ECO:0000255" key="1">
    <source>
        <dbReference type="HAMAP-Rule" id="MF_00092"/>
    </source>
</evidence>
<dbReference type="EC" id="3.1.-.-" evidence="1"/>
<dbReference type="EC" id="3.6.4.-" evidence="1"/>
<dbReference type="EMBL" id="AE016879">
    <property type="protein sequence ID" value="AAP28483.1"/>
    <property type="molecule type" value="Genomic_DNA"/>
</dbReference>
<dbReference type="EMBL" id="AE017334">
    <property type="protein sequence ID" value="AAT33915.1"/>
    <property type="molecule type" value="Genomic_DNA"/>
</dbReference>
<dbReference type="EMBL" id="AE017225">
    <property type="protein sequence ID" value="AAT56745.1"/>
    <property type="molecule type" value="Genomic_DNA"/>
</dbReference>
<dbReference type="RefSeq" id="NP_846997.1">
    <property type="nucleotide sequence ID" value="NC_003997.3"/>
</dbReference>
<dbReference type="RefSeq" id="WP_000893730.1">
    <property type="nucleotide sequence ID" value="NZ_WXXJ01000026.1"/>
</dbReference>
<dbReference type="RefSeq" id="YP_030694.1">
    <property type="nucleotide sequence ID" value="NC_005945.1"/>
</dbReference>
<dbReference type="SMR" id="Q81L40"/>
<dbReference type="IntAct" id="Q81L40">
    <property type="interactions" value="2"/>
</dbReference>
<dbReference type="STRING" id="261594.GBAA_4794"/>
<dbReference type="GeneID" id="45024423"/>
<dbReference type="KEGG" id="ban:BA_4794"/>
<dbReference type="KEGG" id="banh:HYU01_23360"/>
<dbReference type="KEGG" id="bar:GBAA_4794"/>
<dbReference type="KEGG" id="bat:BAS4447"/>
<dbReference type="PATRIC" id="fig|198094.11.peg.4755"/>
<dbReference type="eggNOG" id="COG1193">
    <property type="taxonomic scope" value="Bacteria"/>
</dbReference>
<dbReference type="HOGENOM" id="CLU_011252_2_1_9"/>
<dbReference type="OMA" id="IHAIIND"/>
<dbReference type="OrthoDB" id="9808166at2"/>
<dbReference type="Proteomes" id="UP000000427">
    <property type="component" value="Chromosome"/>
</dbReference>
<dbReference type="Proteomes" id="UP000000594">
    <property type="component" value="Chromosome"/>
</dbReference>
<dbReference type="GO" id="GO:0005524">
    <property type="term" value="F:ATP binding"/>
    <property type="evidence" value="ECO:0007669"/>
    <property type="project" value="UniProtKB-UniRule"/>
</dbReference>
<dbReference type="GO" id="GO:0016887">
    <property type="term" value="F:ATP hydrolysis activity"/>
    <property type="evidence" value="ECO:0007669"/>
    <property type="project" value="InterPro"/>
</dbReference>
<dbReference type="GO" id="GO:0140664">
    <property type="term" value="F:ATP-dependent DNA damage sensor activity"/>
    <property type="evidence" value="ECO:0007669"/>
    <property type="project" value="InterPro"/>
</dbReference>
<dbReference type="GO" id="GO:0004519">
    <property type="term" value="F:endonuclease activity"/>
    <property type="evidence" value="ECO:0007669"/>
    <property type="project" value="UniProtKB-UniRule"/>
</dbReference>
<dbReference type="GO" id="GO:0030983">
    <property type="term" value="F:mismatched DNA binding"/>
    <property type="evidence" value="ECO:0007669"/>
    <property type="project" value="InterPro"/>
</dbReference>
<dbReference type="GO" id="GO:0043023">
    <property type="term" value="F:ribosomal large subunit binding"/>
    <property type="evidence" value="ECO:0007669"/>
    <property type="project" value="UniProtKB-UniRule"/>
</dbReference>
<dbReference type="GO" id="GO:0019843">
    <property type="term" value="F:rRNA binding"/>
    <property type="evidence" value="ECO:0007669"/>
    <property type="project" value="UniProtKB-UniRule"/>
</dbReference>
<dbReference type="GO" id="GO:0006298">
    <property type="term" value="P:mismatch repair"/>
    <property type="evidence" value="ECO:0007669"/>
    <property type="project" value="InterPro"/>
</dbReference>
<dbReference type="GO" id="GO:0045910">
    <property type="term" value="P:negative regulation of DNA recombination"/>
    <property type="evidence" value="ECO:0007669"/>
    <property type="project" value="InterPro"/>
</dbReference>
<dbReference type="GO" id="GO:0072344">
    <property type="term" value="P:rescue of stalled ribosome"/>
    <property type="evidence" value="ECO:0007669"/>
    <property type="project" value="UniProtKB-UniRule"/>
</dbReference>
<dbReference type="CDD" id="cd03280">
    <property type="entry name" value="ABC_MutS2"/>
    <property type="match status" value="1"/>
</dbReference>
<dbReference type="CDD" id="cd06503">
    <property type="entry name" value="ATP-synt_Fo_b"/>
    <property type="match status" value="1"/>
</dbReference>
<dbReference type="FunFam" id="3.40.50.300:FF:000830">
    <property type="entry name" value="Endonuclease MutS2"/>
    <property type="match status" value="1"/>
</dbReference>
<dbReference type="Gene3D" id="1.10.1420.10">
    <property type="match status" value="2"/>
</dbReference>
<dbReference type="Gene3D" id="3.30.1370.110">
    <property type="match status" value="1"/>
</dbReference>
<dbReference type="Gene3D" id="3.40.50.300">
    <property type="entry name" value="P-loop containing nucleotide triphosphate hydrolases"/>
    <property type="match status" value="1"/>
</dbReference>
<dbReference type="HAMAP" id="MF_00092">
    <property type="entry name" value="MutS2"/>
    <property type="match status" value="1"/>
</dbReference>
<dbReference type="InterPro" id="IPR000432">
    <property type="entry name" value="DNA_mismatch_repair_MutS_C"/>
</dbReference>
<dbReference type="InterPro" id="IPR007696">
    <property type="entry name" value="DNA_mismatch_repair_MutS_core"/>
</dbReference>
<dbReference type="InterPro" id="IPR036187">
    <property type="entry name" value="DNA_mismatch_repair_MutS_sf"/>
</dbReference>
<dbReference type="InterPro" id="IPR046893">
    <property type="entry name" value="MSSS"/>
</dbReference>
<dbReference type="InterPro" id="IPR045076">
    <property type="entry name" value="MutS"/>
</dbReference>
<dbReference type="InterPro" id="IPR005747">
    <property type="entry name" value="MutS2"/>
</dbReference>
<dbReference type="InterPro" id="IPR027417">
    <property type="entry name" value="P-loop_NTPase"/>
</dbReference>
<dbReference type="InterPro" id="IPR002625">
    <property type="entry name" value="Smr_dom"/>
</dbReference>
<dbReference type="InterPro" id="IPR036063">
    <property type="entry name" value="Smr_dom_sf"/>
</dbReference>
<dbReference type="NCBIfam" id="TIGR01069">
    <property type="entry name" value="mutS2"/>
    <property type="match status" value="1"/>
</dbReference>
<dbReference type="PANTHER" id="PTHR48466:SF2">
    <property type="entry name" value="OS10G0509000 PROTEIN"/>
    <property type="match status" value="1"/>
</dbReference>
<dbReference type="PANTHER" id="PTHR48466">
    <property type="entry name" value="OS10G0509000 PROTEIN-RELATED"/>
    <property type="match status" value="1"/>
</dbReference>
<dbReference type="Pfam" id="PF20297">
    <property type="entry name" value="MSSS"/>
    <property type="match status" value="1"/>
</dbReference>
<dbReference type="Pfam" id="PF00488">
    <property type="entry name" value="MutS_V"/>
    <property type="match status" value="1"/>
</dbReference>
<dbReference type="Pfam" id="PF01713">
    <property type="entry name" value="Smr"/>
    <property type="match status" value="1"/>
</dbReference>
<dbReference type="PIRSF" id="PIRSF005814">
    <property type="entry name" value="MutS_YshD"/>
    <property type="match status" value="1"/>
</dbReference>
<dbReference type="SMART" id="SM00534">
    <property type="entry name" value="MUTSac"/>
    <property type="match status" value="1"/>
</dbReference>
<dbReference type="SMART" id="SM00533">
    <property type="entry name" value="MUTSd"/>
    <property type="match status" value="1"/>
</dbReference>
<dbReference type="SMART" id="SM00463">
    <property type="entry name" value="SMR"/>
    <property type="match status" value="1"/>
</dbReference>
<dbReference type="SUPFAM" id="SSF48334">
    <property type="entry name" value="DNA repair protein MutS, domain III"/>
    <property type="match status" value="1"/>
</dbReference>
<dbReference type="SUPFAM" id="SSF52540">
    <property type="entry name" value="P-loop containing nucleoside triphosphate hydrolases"/>
    <property type="match status" value="1"/>
</dbReference>
<dbReference type="SUPFAM" id="SSF160443">
    <property type="entry name" value="SMR domain-like"/>
    <property type="match status" value="1"/>
</dbReference>
<dbReference type="PROSITE" id="PS00486">
    <property type="entry name" value="DNA_MISMATCH_REPAIR_2"/>
    <property type="match status" value="1"/>
</dbReference>
<dbReference type="PROSITE" id="PS50828">
    <property type="entry name" value="SMR"/>
    <property type="match status" value="1"/>
</dbReference>
<organism>
    <name type="scientific">Bacillus anthracis</name>
    <dbReference type="NCBI Taxonomy" id="1392"/>
    <lineage>
        <taxon>Bacteria</taxon>
        <taxon>Bacillati</taxon>
        <taxon>Bacillota</taxon>
        <taxon>Bacilli</taxon>
        <taxon>Bacillales</taxon>
        <taxon>Bacillaceae</taxon>
        <taxon>Bacillus</taxon>
        <taxon>Bacillus cereus group</taxon>
    </lineage>
</organism>